<evidence type="ECO:0000255" key="1">
    <source>
        <dbReference type="HAMAP-Rule" id="MF_00008"/>
    </source>
</evidence>
<keyword id="KW-0963">Cytoplasm</keyword>
<keyword id="KW-0489">Methyltransferase</keyword>
<keyword id="KW-0545">Nucleotide biosynthesis</keyword>
<keyword id="KW-0808">Transferase</keyword>
<dbReference type="EC" id="2.1.1.45" evidence="1"/>
<dbReference type="EMBL" id="CP001615">
    <property type="protein sequence ID" value="ACQ69075.1"/>
    <property type="molecule type" value="Genomic_DNA"/>
</dbReference>
<dbReference type="RefSeq" id="WP_012726194.1">
    <property type="nucleotide sequence ID" value="NC_012673.1"/>
</dbReference>
<dbReference type="SMR" id="C4L1C9"/>
<dbReference type="STRING" id="360911.EAT1b_0141"/>
<dbReference type="KEGG" id="eat:EAT1b_0141"/>
<dbReference type="eggNOG" id="COG0207">
    <property type="taxonomic scope" value="Bacteria"/>
</dbReference>
<dbReference type="HOGENOM" id="CLU_021669_0_0_9"/>
<dbReference type="OrthoDB" id="9774633at2"/>
<dbReference type="UniPathway" id="UPA00575"/>
<dbReference type="Proteomes" id="UP000000716">
    <property type="component" value="Chromosome"/>
</dbReference>
<dbReference type="GO" id="GO:0005829">
    <property type="term" value="C:cytosol"/>
    <property type="evidence" value="ECO:0007669"/>
    <property type="project" value="TreeGrafter"/>
</dbReference>
<dbReference type="GO" id="GO:0004799">
    <property type="term" value="F:thymidylate synthase activity"/>
    <property type="evidence" value="ECO:0007669"/>
    <property type="project" value="UniProtKB-UniRule"/>
</dbReference>
<dbReference type="GO" id="GO:0006231">
    <property type="term" value="P:dTMP biosynthetic process"/>
    <property type="evidence" value="ECO:0007669"/>
    <property type="project" value="UniProtKB-UniRule"/>
</dbReference>
<dbReference type="GO" id="GO:0006235">
    <property type="term" value="P:dTTP biosynthetic process"/>
    <property type="evidence" value="ECO:0007669"/>
    <property type="project" value="UniProtKB-UniRule"/>
</dbReference>
<dbReference type="GO" id="GO:0032259">
    <property type="term" value="P:methylation"/>
    <property type="evidence" value="ECO:0007669"/>
    <property type="project" value="UniProtKB-KW"/>
</dbReference>
<dbReference type="CDD" id="cd00351">
    <property type="entry name" value="TS_Pyrimidine_HMase"/>
    <property type="match status" value="1"/>
</dbReference>
<dbReference type="FunFam" id="3.30.572.10:FF:000001">
    <property type="entry name" value="Thymidylate synthase"/>
    <property type="match status" value="1"/>
</dbReference>
<dbReference type="Gene3D" id="3.30.572.10">
    <property type="entry name" value="Thymidylate synthase/dCMP hydroxymethylase domain"/>
    <property type="match status" value="1"/>
</dbReference>
<dbReference type="HAMAP" id="MF_00008">
    <property type="entry name" value="Thymidy_synth_bact"/>
    <property type="match status" value="1"/>
</dbReference>
<dbReference type="InterPro" id="IPR045097">
    <property type="entry name" value="Thymidate_synth/dCMP_Mease"/>
</dbReference>
<dbReference type="InterPro" id="IPR023451">
    <property type="entry name" value="Thymidate_synth/dCMP_Mease_dom"/>
</dbReference>
<dbReference type="InterPro" id="IPR036926">
    <property type="entry name" value="Thymidate_synth/dCMP_Mease_sf"/>
</dbReference>
<dbReference type="InterPro" id="IPR000398">
    <property type="entry name" value="Thymidylate_synthase"/>
</dbReference>
<dbReference type="InterPro" id="IPR020940">
    <property type="entry name" value="Thymidylate_synthase_AS"/>
</dbReference>
<dbReference type="NCBIfam" id="NF002497">
    <property type="entry name" value="PRK01827.1-3"/>
    <property type="match status" value="1"/>
</dbReference>
<dbReference type="NCBIfam" id="NF002499">
    <property type="entry name" value="PRK01827.1-5"/>
    <property type="match status" value="1"/>
</dbReference>
<dbReference type="NCBIfam" id="TIGR03284">
    <property type="entry name" value="thym_sym"/>
    <property type="match status" value="2"/>
</dbReference>
<dbReference type="PANTHER" id="PTHR11548:SF9">
    <property type="entry name" value="THYMIDYLATE SYNTHASE"/>
    <property type="match status" value="1"/>
</dbReference>
<dbReference type="PANTHER" id="PTHR11548">
    <property type="entry name" value="THYMIDYLATE SYNTHASE 1"/>
    <property type="match status" value="1"/>
</dbReference>
<dbReference type="Pfam" id="PF00303">
    <property type="entry name" value="Thymidylat_synt"/>
    <property type="match status" value="1"/>
</dbReference>
<dbReference type="PRINTS" id="PR00108">
    <property type="entry name" value="THYMDSNTHASE"/>
</dbReference>
<dbReference type="SUPFAM" id="SSF55831">
    <property type="entry name" value="Thymidylate synthase/dCMP hydroxymethylase"/>
    <property type="match status" value="1"/>
</dbReference>
<dbReference type="PROSITE" id="PS00091">
    <property type="entry name" value="THYMIDYLATE_SYNTHASE"/>
    <property type="match status" value="1"/>
</dbReference>
<name>TYSY_EXISA</name>
<proteinExistence type="inferred from homology"/>
<reference key="1">
    <citation type="journal article" date="2011" name="J. Bacteriol.">
        <title>Complete genome sequence of the Thermophilic Bacterium Exiguobacterium sp. AT1b.</title>
        <authorList>
            <person name="Vishnivetskaya T.A."/>
            <person name="Lucas S."/>
            <person name="Copeland A."/>
            <person name="Lapidus A."/>
            <person name="Glavina del Rio T."/>
            <person name="Dalin E."/>
            <person name="Tice H."/>
            <person name="Bruce D.C."/>
            <person name="Goodwin L.A."/>
            <person name="Pitluck S."/>
            <person name="Saunders E."/>
            <person name="Brettin T."/>
            <person name="Detter C."/>
            <person name="Han C."/>
            <person name="Larimer F."/>
            <person name="Land M.L."/>
            <person name="Hauser L.J."/>
            <person name="Kyrpides N.C."/>
            <person name="Ovchinnikova G."/>
            <person name="Kathariou S."/>
            <person name="Ramaley R.F."/>
            <person name="Rodrigues D.F."/>
            <person name="Hendrix C."/>
            <person name="Richardson P."/>
            <person name="Tiedje J.M."/>
        </authorList>
    </citation>
    <scope>NUCLEOTIDE SEQUENCE [LARGE SCALE GENOMIC DNA]</scope>
    <source>
        <strain>ATCC BAA-1283 / AT1b</strain>
    </source>
</reference>
<comment type="function">
    <text evidence="1">Catalyzes the reductive methylation of 2'-deoxyuridine-5'-monophosphate (dUMP) to 2'-deoxythymidine-5'-monophosphate (dTMP) while utilizing 5,10-methylenetetrahydrofolate (mTHF) as the methyl donor and reductant in the reaction, yielding dihydrofolate (DHF) as a by-product. This enzymatic reaction provides an intracellular de novo source of dTMP, an essential precursor for DNA biosynthesis.</text>
</comment>
<comment type="catalytic activity">
    <reaction evidence="1">
        <text>dUMP + (6R)-5,10-methylene-5,6,7,8-tetrahydrofolate = 7,8-dihydrofolate + dTMP</text>
        <dbReference type="Rhea" id="RHEA:12104"/>
        <dbReference type="ChEBI" id="CHEBI:15636"/>
        <dbReference type="ChEBI" id="CHEBI:57451"/>
        <dbReference type="ChEBI" id="CHEBI:63528"/>
        <dbReference type="ChEBI" id="CHEBI:246422"/>
        <dbReference type="EC" id="2.1.1.45"/>
    </reaction>
</comment>
<comment type="pathway">
    <text evidence="1">Pyrimidine metabolism; dTTP biosynthesis.</text>
</comment>
<comment type="subunit">
    <text evidence="1">Homodimer.</text>
</comment>
<comment type="subcellular location">
    <subcellularLocation>
        <location evidence="1">Cytoplasm</location>
    </subcellularLocation>
</comment>
<comment type="similarity">
    <text evidence="1">Belongs to the thymidylate synthase family. Bacterial-type ThyA subfamily.</text>
</comment>
<gene>
    <name evidence="1" type="primary">thyA</name>
    <name type="ordered locus">EAT1b_0141</name>
</gene>
<protein>
    <recommendedName>
        <fullName evidence="1">Thymidylate synthase</fullName>
        <shortName evidence="1">TS</shortName>
        <shortName evidence="1">TSase</shortName>
        <ecNumber evidence="1">2.1.1.45</ecNumber>
    </recommendedName>
</protein>
<sequence length="264" mass="30225">MKQYHDLCRHILDQGVVKEDRTGTGTTSVFGYQMRFNLQEGFPLITTKKLHIRSIIHELLWFISGETNVRYLQDNGVRIWNEWADEEGNLGPVYGSQWRSFPRPDGSSVDQLAQVIEQIKTNPDSRRLIVSAWNPGQLEEMALPPCHLLFQFYVADGKLSCQLYQRSADTFLGVPFNIASYALLTHMVAHVTGLEVGDFVHTLGDAHIYHNHLEQVELQLSRDPRPLPKLNIVRDVSSIESFRFEDFEILGYDPHPHIKGEVSV</sequence>
<feature type="chain" id="PRO_1000201719" description="Thymidylate synthase">
    <location>
        <begin position="1"/>
        <end position="264"/>
    </location>
</feature>
<feature type="active site" description="Nucleophile" evidence="1">
    <location>
        <position position="146"/>
    </location>
</feature>
<feature type="binding site" description="in other chain" evidence="1">
    <location>
        <position position="21"/>
    </location>
    <ligand>
        <name>dUMP</name>
        <dbReference type="ChEBI" id="CHEBI:246422"/>
        <note>ligand shared between dimeric partners</note>
    </ligand>
</feature>
<feature type="binding site" evidence="1">
    <location>
        <position position="51"/>
    </location>
    <ligand>
        <name>(6R)-5,10-methylene-5,6,7,8-tetrahydrofolate</name>
        <dbReference type="ChEBI" id="CHEBI:15636"/>
    </ligand>
</feature>
<feature type="binding site" evidence="1">
    <location>
        <begin position="126"/>
        <end position="127"/>
    </location>
    <ligand>
        <name>dUMP</name>
        <dbReference type="ChEBI" id="CHEBI:246422"/>
        <note>ligand shared between dimeric partners</note>
    </ligand>
</feature>
<feature type="binding site" description="in other chain" evidence="1">
    <location>
        <begin position="166"/>
        <end position="169"/>
    </location>
    <ligand>
        <name>dUMP</name>
        <dbReference type="ChEBI" id="CHEBI:246422"/>
        <note>ligand shared between dimeric partners</note>
    </ligand>
</feature>
<feature type="binding site" evidence="1">
    <location>
        <position position="169"/>
    </location>
    <ligand>
        <name>(6R)-5,10-methylene-5,6,7,8-tetrahydrofolate</name>
        <dbReference type="ChEBI" id="CHEBI:15636"/>
    </ligand>
</feature>
<feature type="binding site" description="in other chain" evidence="1">
    <location>
        <position position="177"/>
    </location>
    <ligand>
        <name>dUMP</name>
        <dbReference type="ChEBI" id="CHEBI:246422"/>
        <note>ligand shared between dimeric partners</note>
    </ligand>
</feature>
<feature type="binding site" description="in other chain" evidence="1">
    <location>
        <begin position="207"/>
        <end position="209"/>
    </location>
    <ligand>
        <name>dUMP</name>
        <dbReference type="ChEBI" id="CHEBI:246422"/>
        <note>ligand shared between dimeric partners</note>
    </ligand>
</feature>
<feature type="binding site" evidence="1">
    <location>
        <position position="263"/>
    </location>
    <ligand>
        <name>(6R)-5,10-methylene-5,6,7,8-tetrahydrofolate</name>
        <dbReference type="ChEBI" id="CHEBI:15636"/>
    </ligand>
</feature>
<accession>C4L1C9</accession>
<organism>
    <name type="scientific">Exiguobacterium sp. (strain ATCC BAA-1283 / AT1b)</name>
    <dbReference type="NCBI Taxonomy" id="360911"/>
    <lineage>
        <taxon>Bacteria</taxon>
        <taxon>Bacillati</taxon>
        <taxon>Bacillota</taxon>
        <taxon>Bacilli</taxon>
        <taxon>Bacillales</taxon>
        <taxon>Bacillales Family XII. Incertae Sedis</taxon>
        <taxon>Exiguobacterium</taxon>
    </lineage>
</organism>